<gene>
    <name evidence="1" type="primary">mnmC</name>
    <name type="ordered locus">SPAB_00591</name>
</gene>
<proteinExistence type="inferred from homology"/>
<organism>
    <name type="scientific">Salmonella paratyphi B (strain ATCC BAA-1250 / SPB7)</name>
    <dbReference type="NCBI Taxonomy" id="1016998"/>
    <lineage>
        <taxon>Bacteria</taxon>
        <taxon>Pseudomonadati</taxon>
        <taxon>Pseudomonadota</taxon>
        <taxon>Gammaproteobacteria</taxon>
        <taxon>Enterobacterales</taxon>
        <taxon>Enterobacteriaceae</taxon>
        <taxon>Salmonella</taxon>
    </lineage>
</organism>
<sequence>MKQYAIQPATLEFNAEGTPVSRDFDDVYFSNDNGLEETRYVFLGGNRLAERFPVHSHPLFIVAESGFGTGLNFLTLWQAFDSFRSAHPQATLQRLHFISFEKFPLTRDDLALAHQHWPELAPWAEQLQAQWPLPLPGCHRLLLDRGRVTLDLWFGDINELTDQLDATLNQTVDAWFLDGFAPAKNPDMWTPNLFNAMARLARPGATLATFTSAGFVRRGLQEAGFTMQKRKGFGRKREMLCGVMEQHLMPTLSAPWFYRSGSEKRETAIIGGGIASALLSLALLRRGWQVTLYCADDQPAQGASGNRQGALYPLLSKHDAAINRFFPTAFTFARRLYDALPVSFDHDWCGVTQLGWDEKSQQKIAQMLSLALPAELASALNAEEAEQAVGVTTRCGGITYPAGGWLCPEQLTRAVIALATEQGLQTRFRHTLTSLVAQESRWQLRFMSGETASHETVVLANGHQINRFDQTRPLPVYAVGGQVSHIPTTPALSALRQVLCYDGYLTPQNPHNQQHCIGASYHRGDESTVWREEDQRQNRQRLLDCFPDAKWATEVDVSGNSARCGVRCATRDHLPMVGNVPDYHATLTHYADLADNKTSAAPAPVYPGLFMLGALGSRGLCSAPLCAEILAAQMSNEPIPLDASTLAALNPNRLWVRKLLKGKAVK</sequence>
<keyword id="KW-0963">Cytoplasm</keyword>
<keyword id="KW-0274">FAD</keyword>
<keyword id="KW-0285">Flavoprotein</keyword>
<keyword id="KW-0489">Methyltransferase</keyword>
<keyword id="KW-0511">Multifunctional enzyme</keyword>
<keyword id="KW-0560">Oxidoreductase</keyword>
<keyword id="KW-0949">S-adenosyl-L-methionine</keyword>
<keyword id="KW-0808">Transferase</keyword>
<keyword id="KW-0819">tRNA processing</keyword>
<protein>
    <recommendedName>
        <fullName evidence="1">tRNA 5-methylaminomethyl-2-thiouridine biosynthesis bifunctional protein MnmC</fullName>
        <shortName evidence="1">tRNA mnm(5)s(2)U biosynthesis bifunctional protein</shortName>
    </recommendedName>
    <domain>
        <recommendedName>
            <fullName evidence="1">tRNA (mnm(5)s(2)U34)-methyltransferase</fullName>
            <ecNumber evidence="1">2.1.1.61</ecNumber>
        </recommendedName>
    </domain>
    <domain>
        <recommendedName>
            <fullName evidence="1">FAD-dependent cmnm(5)s(2)U34 oxidoreductase</fullName>
            <ecNumber evidence="1">1.5.-.-</ecNumber>
        </recommendedName>
    </domain>
</protein>
<comment type="function">
    <text evidence="1">Catalyzes the last two steps in the biosynthesis of 5-methylaminomethyl-2-thiouridine (mnm(5)s(2)U) at the wobble position (U34) in tRNA. Catalyzes the FAD-dependent demodification of cmnm(5)s(2)U34 to nm(5)s(2)U34, followed by the transfer of a methyl group from S-adenosyl-L-methionine to nm(5)s(2)U34, to form mnm(5)s(2)U34.</text>
</comment>
<comment type="catalytic activity">
    <reaction evidence="1">
        <text>5-aminomethyl-2-thiouridine(34) in tRNA + S-adenosyl-L-methionine = 5-methylaminomethyl-2-thiouridine(34) in tRNA + S-adenosyl-L-homocysteine + H(+)</text>
        <dbReference type="Rhea" id="RHEA:19569"/>
        <dbReference type="Rhea" id="RHEA-COMP:10195"/>
        <dbReference type="Rhea" id="RHEA-COMP:10197"/>
        <dbReference type="ChEBI" id="CHEBI:15378"/>
        <dbReference type="ChEBI" id="CHEBI:57856"/>
        <dbReference type="ChEBI" id="CHEBI:59789"/>
        <dbReference type="ChEBI" id="CHEBI:74454"/>
        <dbReference type="ChEBI" id="CHEBI:74455"/>
        <dbReference type="EC" id="2.1.1.61"/>
    </reaction>
</comment>
<comment type="cofactor">
    <cofactor evidence="1">
        <name>FAD</name>
        <dbReference type="ChEBI" id="CHEBI:57692"/>
    </cofactor>
</comment>
<comment type="subcellular location">
    <subcellularLocation>
        <location evidence="1">Cytoplasm</location>
    </subcellularLocation>
</comment>
<comment type="similarity">
    <text evidence="1">In the N-terminal section; belongs to the methyltransferase superfamily. tRNA (mnm(5)s(2)U34)-methyltransferase family.</text>
</comment>
<comment type="similarity">
    <text evidence="1">In the C-terminal section; belongs to the DAO family.</text>
</comment>
<accession>A9N465</accession>
<name>MNMC_SALPB</name>
<reference key="1">
    <citation type="submission" date="2007-11" db="EMBL/GenBank/DDBJ databases">
        <authorList>
            <consortium name="The Salmonella enterica serovar Paratyphi B Genome Sequencing Project"/>
            <person name="McClelland M."/>
            <person name="Sanderson E.K."/>
            <person name="Porwollik S."/>
            <person name="Spieth J."/>
            <person name="Clifton W.S."/>
            <person name="Fulton R."/>
            <person name="Cordes M."/>
            <person name="Wollam A."/>
            <person name="Shah N."/>
            <person name="Pepin K."/>
            <person name="Bhonagiri V."/>
            <person name="Nash W."/>
            <person name="Johnson M."/>
            <person name="Thiruvilangam P."/>
            <person name="Wilson R."/>
        </authorList>
    </citation>
    <scope>NUCLEOTIDE SEQUENCE [LARGE SCALE GENOMIC DNA]</scope>
    <source>
        <strain>ATCC BAA-1250 / SPB7</strain>
    </source>
</reference>
<feature type="chain" id="PRO_1000084796" description="tRNA 5-methylaminomethyl-2-thiouridine biosynthesis bifunctional protein MnmC">
    <location>
        <begin position="1"/>
        <end position="666"/>
    </location>
</feature>
<feature type="region of interest" description="tRNA (mnm(5)s(2)U34)-methyltransferase">
    <location>
        <begin position="1"/>
        <end position="245"/>
    </location>
</feature>
<feature type="region of interest" description="FAD-dependent cmnm(5)s(2)U34 oxidoreductase">
    <location>
        <begin position="270"/>
        <end position="666"/>
    </location>
</feature>
<dbReference type="EC" id="2.1.1.61" evidence="1"/>
<dbReference type="EC" id="1.5.-.-" evidence="1"/>
<dbReference type="EMBL" id="CP000886">
    <property type="protein sequence ID" value="ABX66017.1"/>
    <property type="molecule type" value="Genomic_DNA"/>
</dbReference>
<dbReference type="SMR" id="A9N465"/>
<dbReference type="KEGG" id="spq:SPAB_00591"/>
<dbReference type="PATRIC" id="fig|1016998.12.peg.552"/>
<dbReference type="HOGENOM" id="CLU_022427_1_0_6"/>
<dbReference type="Proteomes" id="UP000008556">
    <property type="component" value="Chromosome"/>
</dbReference>
<dbReference type="GO" id="GO:0005737">
    <property type="term" value="C:cytoplasm"/>
    <property type="evidence" value="ECO:0007669"/>
    <property type="project" value="UniProtKB-SubCell"/>
</dbReference>
<dbReference type="GO" id="GO:0050660">
    <property type="term" value="F:flavin adenine dinucleotide binding"/>
    <property type="evidence" value="ECO:0007669"/>
    <property type="project" value="UniProtKB-UniRule"/>
</dbReference>
<dbReference type="GO" id="GO:0016645">
    <property type="term" value="F:oxidoreductase activity, acting on the CH-NH group of donors"/>
    <property type="evidence" value="ECO:0007669"/>
    <property type="project" value="InterPro"/>
</dbReference>
<dbReference type="GO" id="GO:0004808">
    <property type="term" value="F:tRNA (5-methylaminomethyl-2-thiouridylate)(34)-methyltransferase activity"/>
    <property type="evidence" value="ECO:0007669"/>
    <property type="project" value="UniProtKB-EC"/>
</dbReference>
<dbReference type="GO" id="GO:0032259">
    <property type="term" value="P:methylation"/>
    <property type="evidence" value="ECO:0007669"/>
    <property type="project" value="UniProtKB-KW"/>
</dbReference>
<dbReference type="GO" id="GO:0002098">
    <property type="term" value="P:tRNA wobble uridine modification"/>
    <property type="evidence" value="ECO:0007669"/>
    <property type="project" value="TreeGrafter"/>
</dbReference>
<dbReference type="FunFam" id="3.40.50.150:FF:000107">
    <property type="entry name" value="tRNA 5-methylaminomethyl-2-thiouridine biosynthesis bifunctional protein MnmC"/>
    <property type="match status" value="1"/>
</dbReference>
<dbReference type="Gene3D" id="3.30.9.10">
    <property type="entry name" value="D-Amino Acid Oxidase, subunit A, domain 2"/>
    <property type="match status" value="1"/>
</dbReference>
<dbReference type="Gene3D" id="3.50.50.60">
    <property type="entry name" value="FAD/NAD(P)-binding domain"/>
    <property type="match status" value="1"/>
</dbReference>
<dbReference type="Gene3D" id="3.40.50.150">
    <property type="entry name" value="Vaccinia Virus protein VP39"/>
    <property type="match status" value="1"/>
</dbReference>
<dbReference type="HAMAP" id="MF_01102">
    <property type="entry name" value="MnmC"/>
    <property type="match status" value="1"/>
</dbReference>
<dbReference type="InterPro" id="IPR006076">
    <property type="entry name" value="FAD-dep_OxRdtase"/>
</dbReference>
<dbReference type="InterPro" id="IPR036188">
    <property type="entry name" value="FAD/NAD-bd_sf"/>
</dbReference>
<dbReference type="InterPro" id="IPR008471">
    <property type="entry name" value="MnmC-like_methylTransf"/>
</dbReference>
<dbReference type="InterPro" id="IPR029063">
    <property type="entry name" value="SAM-dependent_MTases_sf"/>
</dbReference>
<dbReference type="InterPro" id="IPR023032">
    <property type="entry name" value="tRNA_MAMT_biosynth_bifunc_MnmC"/>
</dbReference>
<dbReference type="InterPro" id="IPR047785">
    <property type="entry name" value="tRNA_MNMC2"/>
</dbReference>
<dbReference type="InterPro" id="IPR017610">
    <property type="entry name" value="tRNA_S-uridine_synth_MnmC_C"/>
</dbReference>
<dbReference type="NCBIfam" id="TIGR03197">
    <property type="entry name" value="MnmC_Cterm"/>
    <property type="match status" value="1"/>
</dbReference>
<dbReference type="NCBIfam" id="NF002480">
    <property type="entry name" value="PRK01747.1-1"/>
    <property type="match status" value="1"/>
</dbReference>
<dbReference type="NCBIfam" id="NF002481">
    <property type="entry name" value="PRK01747.1-2"/>
    <property type="match status" value="1"/>
</dbReference>
<dbReference type="NCBIfam" id="NF002482">
    <property type="entry name" value="PRK01747.1-3"/>
    <property type="match status" value="1"/>
</dbReference>
<dbReference type="NCBIfam" id="NF002484">
    <property type="entry name" value="PRK01747.1-5"/>
    <property type="match status" value="1"/>
</dbReference>
<dbReference type="NCBIfam" id="NF033855">
    <property type="entry name" value="tRNA_MNMC2"/>
    <property type="match status" value="1"/>
</dbReference>
<dbReference type="PANTHER" id="PTHR13847">
    <property type="entry name" value="SARCOSINE DEHYDROGENASE-RELATED"/>
    <property type="match status" value="1"/>
</dbReference>
<dbReference type="PANTHER" id="PTHR13847:SF283">
    <property type="entry name" value="TRNA 5-METHYLAMINOMETHYL-2-THIOURIDINE BIOSYNTHESIS BIFUNCTIONAL PROTEIN MNMC"/>
    <property type="match status" value="1"/>
</dbReference>
<dbReference type="Pfam" id="PF01266">
    <property type="entry name" value="DAO"/>
    <property type="match status" value="1"/>
</dbReference>
<dbReference type="Pfam" id="PF05430">
    <property type="entry name" value="Methyltransf_30"/>
    <property type="match status" value="1"/>
</dbReference>
<dbReference type="SUPFAM" id="SSF51905">
    <property type="entry name" value="FAD/NAD(P)-binding domain"/>
    <property type="match status" value="1"/>
</dbReference>
<evidence type="ECO:0000255" key="1">
    <source>
        <dbReference type="HAMAP-Rule" id="MF_01102"/>
    </source>
</evidence>